<dbReference type="EMBL" id="CP000469">
    <property type="protein sequence ID" value="ABK50099.1"/>
    <property type="molecule type" value="Genomic_DNA"/>
</dbReference>
<dbReference type="RefSeq" id="WP_011718613.1">
    <property type="nucleotide sequence ID" value="NC_008577.1"/>
</dbReference>
<dbReference type="SMR" id="A0L230"/>
<dbReference type="STRING" id="94122.Shewana3_3881"/>
<dbReference type="KEGG" id="shn:Shewana3_3881"/>
<dbReference type="eggNOG" id="COG0792">
    <property type="taxonomic scope" value="Bacteria"/>
</dbReference>
<dbReference type="HOGENOM" id="CLU_115353_1_0_6"/>
<dbReference type="OrthoDB" id="9794876at2"/>
<dbReference type="Proteomes" id="UP000002589">
    <property type="component" value="Chromosome"/>
</dbReference>
<dbReference type="GO" id="GO:0003676">
    <property type="term" value="F:nucleic acid binding"/>
    <property type="evidence" value="ECO:0007669"/>
    <property type="project" value="InterPro"/>
</dbReference>
<dbReference type="CDD" id="cd20736">
    <property type="entry name" value="PoNe_Nuclease"/>
    <property type="match status" value="1"/>
</dbReference>
<dbReference type="Gene3D" id="3.40.1350.10">
    <property type="match status" value="1"/>
</dbReference>
<dbReference type="HAMAP" id="MF_00048">
    <property type="entry name" value="UPF0102"/>
    <property type="match status" value="1"/>
</dbReference>
<dbReference type="InterPro" id="IPR011335">
    <property type="entry name" value="Restrct_endonuc-II-like"/>
</dbReference>
<dbReference type="InterPro" id="IPR011856">
    <property type="entry name" value="tRNA_endonuc-like_dom_sf"/>
</dbReference>
<dbReference type="InterPro" id="IPR003509">
    <property type="entry name" value="UPF0102_YraN-like"/>
</dbReference>
<dbReference type="NCBIfam" id="NF009150">
    <property type="entry name" value="PRK12497.1-3"/>
    <property type="match status" value="1"/>
</dbReference>
<dbReference type="NCBIfam" id="TIGR00252">
    <property type="entry name" value="YraN family protein"/>
    <property type="match status" value="1"/>
</dbReference>
<dbReference type="PANTHER" id="PTHR34039">
    <property type="entry name" value="UPF0102 PROTEIN YRAN"/>
    <property type="match status" value="1"/>
</dbReference>
<dbReference type="PANTHER" id="PTHR34039:SF1">
    <property type="entry name" value="UPF0102 PROTEIN YRAN"/>
    <property type="match status" value="1"/>
</dbReference>
<dbReference type="Pfam" id="PF02021">
    <property type="entry name" value="UPF0102"/>
    <property type="match status" value="1"/>
</dbReference>
<dbReference type="SUPFAM" id="SSF52980">
    <property type="entry name" value="Restriction endonuclease-like"/>
    <property type="match status" value="1"/>
</dbReference>
<comment type="similarity">
    <text evidence="1">Belongs to the UPF0102 family.</text>
</comment>
<evidence type="ECO:0000255" key="1">
    <source>
        <dbReference type="HAMAP-Rule" id="MF_00048"/>
    </source>
</evidence>
<organism>
    <name type="scientific">Shewanella sp. (strain ANA-3)</name>
    <dbReference type="NCBI Taxonomy" id="94122"/>
    <lineage>
        <taxon>Bacteria</taxon>
        <taxon>Pseudomonadati</taxon>
        <taxon>Pseudomonadota</taxon>
        <taxon>Gammaproteobacteria</taxon>
        <taxon>Alteromonadales</taxon>
        <taxon>Shewanellaceae</taxon>
        <taxon>Shewanella</taxon>
    </lineage>
</organism>
<gene>
    <name type="ordered locus">Shewana3_3881</name>
</gene>
<name>Y3881_SHESA</name>
<sequence>MTLGQQAESLAQGYLEQQGLTFVARNVRYPFGEIDLVMRHKHHWVFVEVKYRSANQFGGAIQALSKAQIGRIRMAASHYLQTHKLDVPCRFDVVAIEDAQIHWLVDAF</sequence>
<reference key="1">
    <citation type="submission" date="2006-09" db="EMBL/GenBank/DDBJ databases">
        <title>Complete sequence of chromosome 1 of Shewanella sp. ANA-3.</title>
        <authorList>
            <person name="Copeland A."/>
            <person name="Lucas S."/>
            <person name="Lapidus A."/>
            <person name="Barry K."/>
            <person name="Detter J.C."/>
            <person name="Glavina del Rio T."/>
            <person name="Hammon N."/>
            <person name="Israni S."/>
            <person name="Dalin E."/>
            <person name="Tice H."/>
            <person name="Pitluck S."/>
            <person name="Chertkov O."/>
            <person name="Brettin T."/>
            <person name="Bruce D."/>
            <person name="Han C."/>
            <person name="Tapia R."/>
            <person name="Gilna P."/>
            <person name="Schmutz J."/>
            <person name="Larimer F."/>
            <person name="Land M."/>
            <person name="Hauser L."/>
            <person name="Kyrpides N."/>
            <person name="Kim E."/>
            <person name="Newman D."/>
            <person name="Salticov C."/>
            <person name="Konstantinidis K."/>
            <person name="Klappenback J."/>
            <person name="Tiedje J."/>
            <person name="Richardson P."/>
        </authorList>
    </citation>
    <scope>NUCLEOTIDE SEQUENCE [LARGE SCALE GENOMIC DNA]</scope>
    <source>
        <strain>ANA-3</strain>
    </source>
</reference>
<protein>
    <recommendedName>
        <fullName evidence="1">UPF0102 protein Shewana3_3881</fullName>
    </recommendedName>
</protein>
<accession>A0L230</accession>
<proteinExistence type="inferred from homology"/>
<feature type="chain" id="PRO_1000009261" description="UPF0102 protein Shewana3_3881">
    <location>
        <begin position="1"/>
        <end position="108"/>
    </location>
</feature>